<name>EFTU_RICHE</name>
<protein>
    <recommendedName>
        <fullName evidence="2">Elongation factor Tu</fullName>
        <shortName evidence="2">EF-Tu</shortName>
        <ecNumber evidence="2">3.6.5.3</ecNumber>
    </recommendedName>
</protein>
<evidence type="ECO:0000250" key="1"/>
<evidence type="ECO:0000255" key="2">
    <source>
        <dbReference type="HAMAP-Rule" id="MF_00118"/>
    </source>
</evidence>
<keyword id="KW-0963">Cytoplasm</keyword>
<keyword id="KW-0251">Elongation factor</keyword>
<keyword id="KW-0342">GTP-binding</keyword>
<keyword id="KW-0378">Hydrolase</keyword>
<keyword id="KW-0460">Magnesium</keyword>
<keyword id="KW-0479">Metal-binding</keyword>
<keyword id="KW-0547">Nucleotide-binding</keyword>
<keyword id="KW-0648">Protein biosynthesis</keyword>
<dbReference type="EC" id="3.6.5.3" evidence="2"/>
<dbReference type="EMBL" id="AF502184">
    <property type="protein sequence ID" value="AAM90940.1"/>
    <property type="molecule type" value="Genomic_DNA"/>
</dbReference>
<dbReference type="SMR" id="Q8KT99"/>
<dbReference type="GO" id="GO:0005737">
    <property type="term" value="C:cytoplasm"/>
    <property type="evidence" value="ECO:0007669"/>
    <property type="project" value="UniProtKB-SubCell"/>
</dbReference>
<dbReference type="GO" id="GO:0005525">
    <property type="term" value="F:GTP binding"/>
    <property type="evidence" value="ECO:0007669"/>
    <property type="project" value="UniProtKB-UniRule"/>
</dbReference>
<dbReference type="GO" id="GO:0003924">
    <property type="term" value="F:GTPase activity"/>
    <property type="evidence" value="ECO:0007669"/>
    <property type="project" value="InterPro"/>
</dbReference>
<dbReference type="GO" id="GO:0097216">
    <property type="term" value="F:guanosine tetraphosphate binding"/>
    <property type="evidence" value="ECO:0007669"/>
    <property type="project" value="UniProtKB-ARBA"/>
</dbReference>
<dbReference type="GO" id="GO:0003746">
    <property type="term" value="F:translation elongation factor activity"/>
    <property type="evidence" value="ECO:0007669"/>
    <property type="project" value="UniProtKB-UniRule"/>
</dbReference>
<dbReference type="CDD" id="cd01884">
    <property type="entry name" value="EF_Tu"/>
    <property type="match status" value="1"/>
</dbReference>
<dbReference type="CDD" id="cd03697">
    <property type="entry name" value="EFTU_II"/>
    <property type="match status" value="1"/>
</dbReference>
<dbReference type="CDD" id="cd03707">
    <property type="entry name" value="EFTU_III"/>
    <property type="match status" value="1"/>
</dbReference>
<dbReference type="FunFam" id="2.40.30.10:FF:000001">
    <property type="entry name" value="Elongation factor Tu"/>
    <property type="match status" value="1"/>
</dbReference>
<dbReference type="FunFam" id="3.40.50.300:FF:000003">
    <property type="entry name" value="Elongation factor Tu"/>
    <property type="match status" value="1"/>
</dbReference>
<dbReference type="Gene3D" id="3.40.50.300">
    <property type="entry name" value="P-loop containing nucleotide triphosphate hydrolases"/>
    <property type="match status" value="1"/>
</dbReference>
<dbReference type="Gene3D" id="2.40.30.10">
    <property type="entry name" value="Translation factors"/>
    <property type="match status" value="2"/>
</dbReference>
<dbReference type="HAMAP" id="MF_00118_B">
    <property type="entry name" value="EF_Tu_B"/>
    <property type="match status" value="1"/>
</dbReference>
<dbReference type="InterPro" id="IPR041709">
    <property type="entry name" value="EF-Tu_GTP-bd"/>
</dbReference>
<dbReference type="InterPro" id="IPR050055">
    <property type="entry name" value="EF-Tu_GTPase"/>
</dbReference>
<dbReference type="InterPro" id="IPR004161">
    <property type="entry name" value="EFTu-like_2"/>
</dbReference>
<dbReference type="InterPro" id="IPR033720">
    <property type="entry name" value="EFTU_2"/>
</dbReference>
<dbReference type="InterPro" id="IPR031157">
    <property type="entry name" value="G_TR_CS"/>
</dbReference>
<dbReference type="InterPro" id="IPR027417">
    <property type="entry name" value="P-loop_NTPase"/>
</dbReference>
<dbReference type="InterPro" id="IPR005225">
    <property type="entry name" value="Small_GTP-bd"/>
</dbReference>
<dbReference type="InterPro" id="IPR000795">
    <property type="entry name" value="T_Tr_GTP-bd_dom"/>
</dbReference>
<dbReference type="InterPro" id="IPR009000">
    <property type="entry name" value="Transl_B-barrel_sf"/>
</dbReference>
<dbReference type="InterPro" id="IPR009001">
    <property type="entry name" value="Transl_elong_EF1A/Init_IF2_C"/>
</dbReference>
<dbReference type="InterPro" id="IPR004541">
    <property type="entry name" value="Transl_elong_EFTu/EF1A_bac/org"/>
</dbReference>
<dbReference type="InterPro" id="IPR004160">
    <property type="entry name" value="Transl_elong_EFTu/EF1A_C"/>
</dbReference>
<dbReference type="NCBIfam" id="TIGR00485">
    <property type="entry name" value="EF-Tu"/>
    <property type="match status" value="1"/>
</dbReference>
<dbReference type="NCBIfam" id="NF000766">
    <property type="entry name" value="PRK00049.1"/>
    <property type="match status" value="1"/>
</dbReference>
<dbReference type="NCBIfam" id="NF009372">
    <property type="entry name" value="PRK12735.1"/>
    <property type="match status" value="1"/>
</dbReference>
<dbReference type="NCBIfam" id="NF009373">
    <property type="entry name" value="PRK12736.1"/>
    <property type="match status" value="1"/>
</dbReference>
<dbReference type="NCBIfam" id="TIGR00231">
    <property type="entry name" value="small_GTP"/>
    <property type="match status" value="1"/>
</dbReference>
<dbReference type="PANTHER" id="PTHR43721:SF22">
    <property type="entry name" value="ELONGATION FACTOR TU, MITOCHONDRIAL"/>
    <property type="match status" value="1"/>
</dbReference>
<dbReference type="PANTHER" id="PTHR43721">
    <property type="entry name" value="ELONGATION FACTOR TU-RELATED"/>
    <property type="match status" value="1"/>
</dbReference>
<dbReference type="Pfam" id="PF00009">
    <property type="entry name" value="GTP_EFTU"/>
    <property type="match status" value="1"/>
</dbReference>
<dbReference type="Pfam" id="PF03144">
    <property type="entry name" value="GTP_EFTU_D2"/>
    <property type="match status" value="1"/>
</dbReference>
<dbReference type="Pfam" id="PF03143">
    <property type="entry name" value="GTP_EFTU_D3"/>
    <property type="match status" value="1"/>
</dbReference>
<dbReference type="PRINTS" id="PR00315">
    <property type="entry name" value="ELONGATNFCT"/>
</dbReference>
<dbReference type="SUPFAM" id="SSF50465">
    <property type="entry name" value="EF-Tu/eEF-1alpha/eIF2-gamma C-terminal domain"/>
    <property type="match status" value="1"/>
</dbReference>
<dbReference type="SUPFAM" id="SSF52540">
    <property type="entry name" value="P-loop containing nucleoside triphosphate hydrolases"/>
    <property type="match status" value="1"/>
</dbReference>
<dbReference type="SUPFAM" id="SSF50447">
    <property type="entry name" value="Translation proteins"/>
    <property type="match status" value="1"/>
</dbReference>
<dbReference type="PROSITE" id="PS00301">
    <property type="entry name" value="G_TR_1"/>
    <property type="match status" value="1"/>
</dbReference>
<dbReference type="PROSITE" id="PS51722">
    <property type="entry name" value="G_TR_2"/>
    <property type="match status" value="1"/>
</dbReference>
<gene>
    <name evidence="2" type="primary">tuf</name>
</gene>
<organism>
    <name type="scientific">Rickettsia helvetica</name>
    <dbReference type="NCBI Taxonomy" id="35789"/>
    <lineage>
        <taxon>Bacteria</taxon>
        <taxon>Pseudomonadati</taxon>
        <taxon>Pseudomonadota</taxon>
        <taxon>Alphaproteobacteria</taxon>
        <taxon>Rickettsiales</taxon>
        <taxon>Rickettsiaceae</taxon>
        <taxon>Rickettsieae</taxon>
        <taxon>Rickettsia</taxon>
        <taxon>spotted fever group</taxon>
    </lineage>
</organism>
<sequence length="394" mass="42942">MAKAKFERTKPHVNIGTIGHVDHGKTSLTAAITIVLAKTGGAKATAYDQIDAAPEEKERGITISTAHVEYETKNRHYAHVDCPGHADYVKNMITGAAQMDGAILVVSAADGPMPQTREHILLAKQVGVPAMVVFLNKVDMVDDPDLLELVEMEVRELLSKYGFPGDEIPVIKGSALQALEGKPEGEKAINELMDAVDSYIPQPVRATDKPFLMPIEDVFSISGRGTVVTGRVESGIIKVGEEIEIVGLKDTQKTTCTGVEMFRKLLDEGQSGDNVGILLRGTKREEVERGQVLAKPGSIKPHDKFEAEVYVLSKEEGGRHTPFTNDYRPQFYFRTTDVTGTIKLPFDKQMVMPGDNATFTVELIKPIAMQEGLKFSIREGGRTVGAGVVTKINN</sequence>
<accession>Q8KT99</accession>
<comment type="function">
    <text evidence="2">GTP hydrolase that promotes the GTP-dependent binding of aminoacyl-tRNA to the A-site of ribosomes during protein biosynthesis.</text>
</comment>
<comment type="catalytic activity">
    <reaction evidence="2">
        <text>GTP + H2O = GDP + phosphate + H(+)</text>
        <dbReference type="Rhea" id="RHEA:19669"/>
        <dbReference type="ChEBI" id="CHEBI:15377"/>
        <dbReference type="ChEBI" id="CHEBI:15378"/>
        <dbReference type="ChEBI" id="CHEBI:37565"/>
        <dbReference type="ChEBI" id="CHEBI:43474"/>
        <dbReference type="ChEBI" id="CHEBI:58189"/>
        <dbReference type="EC" id="3.6.5.3"/>
    </reaction>
    <physiologicalReaction direction="left-to-right" evidence="2">
        <dbReference type="Rhea" id="RHEA:19670"/>
    </physiologicalReaction>
</comment>
<comment type="subunit">
    <text evidence="2">Monomer.</text>
</comment>
<comment type="subcellular location">
    <subcellularLocation>
        <location evidence="2">Cytoplasm</location>
    </subcellularLocation>
</comment>
<comment type="similarity">
    <text evidence="2">Belongs to the TRAFAC class translation factor GTPase superfamily. Classic translation factor GTPase family. EF-Tu/EF-1A subfamily.</text>
</comment>
<proteinExistence type="inferred from homology"/>
<reference key="1">
    <citation type="journal article" date="2002" name="Mol. Biol. Evol.">
        <title>Proliferation and deterioration of Rickettsia palindromic elements.</title>
        <authorList>
            <person name="Amiri H."/>
            <person name="Alsmark C.M."/>
            <person name="Andersson S.G.E."/>
        </authorList>
    </citation>
    <scope>NUCLEOTIDE SEQUENCE [GENOMIC DNA]</scope>
</reference>
<feature type="chain" id="PRO_0000091375" description="Elongation factor Tu">
    <location>
        <begin position="1"/>
        <end position="394"/>
    </location>
</feature>
<feature type="domain" description="tr-type G">
    <location>
        <begin position="10"/>
        <end position="204"/>
    </location>
</feature>
<feature type="region of interest" description="G1" evidence="1">
    <location>
        <begin position="19"/>
        <end position="26"/>
    </location>
</feature>
<feature type="region of interest" description="G2" evidence="1">
    <location>
        <begin position="60"/>
        <end position="64"/>
    </location>
</feature>
<feature type="region of interest" description="G3" evidence="1">
    <location>
        <begin position="81"/>
        <end position="84"/>
    </location>
</feature>
<feature type="region of interest" description="G4" evidence="1">
    <location>
        <begin position="136"/>
        <end position="139"/>
    </location>
</feature>
<feature type="region of interest" description="G5" evidence="1">
    <location>
        <begin position="174"/>
        <end position="176"/>
    </location>
</feature>
<feature type="binding site" evidence="2">
    <location>
        <begin position="19"/>
        <end position="26"/>
    </location>
    <ligand>
        <name>GTP</name>
        <dbReference type="ChEBI" id="CHEBI:37565"/>
    </ligand>
</feature>
<feature type="binding site" evidence="2">
    <location>
        <position position="26"/>
    </location>
    <ligand>
        <name>Mg(2+)</name>
        <dbReference type="ChEBI" id="CHEBI:18420"/>
    </ligand>
</feature>
<feature type="binding site" evidence="2">
    <location>
        <begin position="81"/>
        <end position="85"/>
    </location>
    <ligand>
        <name>GTP</name>
        <dbReference type="ChEBI" id="CHEBI:37565"/>
    </ligand>
</feature>
<feature type="binding site" evidence="2">
    <location>
        <begin position="136"/>
        <end position="139"/>
    </location>
    <ligand>
        <name>GTP</name>
        <dbReference type="ChEBI" id="CHEBI:37565"/>
    </ligand>
</feature>